<evidence type="ECO:0000255" key="1">
    <source>
        <dbReference type="HAMAP-Rule" id="MF_00649"/>
    </source>
</evidence>
<protein>
    <recommendedName>
        <fullName evidence="1">DNA gyrase inhibitor YacG</fullName>
    </recommendedName>
</protein>
<gene>
    <name evidence="1" type="primary">yacG</name>
    <name type="ordered locus">SSPA0138</name>
</gene>
<name>YACG_SALPK</name>
<keyword id="KW-0479">Metal-binding</keyword>
<keyword id="KW-0862">Zinc</keyword>
<feature type="chain" id="PRO_1000130977" description="DNA gyrase inhibitor YacG">
    <location>
        <begin position="1"/>
        <end position="63"/>
    </location>
</feature>
<feature type="binding site" evidence="1">
    <location>
        <position position="9"/>
    </location>
    <ligand>
        <name>Zn(2+)</name>
        <dbReference type="ChEBI" id="CHEBI:29105"/>
    </ligand>
</feature>
<feature type="binding site" evidence="1">
    <location>
        <position position="12"/>
    </location>
    <ligand>
        <name>Zn(2+)</name>
        <dbReference type="ChEBI" id="CHEBI:29105"/>
    </ligand>
</feature>
<feature type="binding site" evidence="1">
    <location>
        <position position="28"/>
    </location>
    <ligand>
        <name>Zn(2+)</name>
        <dbReference type="ChEBI" id="CHEBI:29105"/>
    </ligand>
</feature>
<feature type="binding site" evidence="1">
    <location>
        <position position="32"/>
    </location>
    <ligand>
        <name>Zn(2+)</name>
        <dbReference type="ChEBI" id="CHEBI:29105"/>
    </ligand>
</feature>
<accession>B5BLD4</accession>
<proteinExistence type="inferred from homology"/>
<comment type="function">
    <text evidence="1">Inhibits all the catalytic activities of DNA gyrase by preventing its interaction with DNA. Acts by binding directly to the C-terminal domain of GyrB, which probably disrupts DNA binding by the gyrase.</text>
</comment>
<comment type="cofactor">
    <cofactor evidence="1">
        <name>Zn(2+)</name>
        <dbReference type="ChEBI" id="CHEBI:29105"/>
    </cofactor>
    <text evidence="1">Binds 1 zinc ion.</text>
</comment>
<comment type="subunit">
    <text evidence="1">Interacts with GyrB.</text>
</comment>
<comment type="similarity">
    <text evidence="1">Belongs to the DNA gyrase inhibitor YacG family.</text>
</comment>
<organism>
    <name type="scientific">Salmonella paratyphi A (strain AKU_12601)</name>
    <dbReference type="NCBI Taxonomy" id="554290"/>
    <lineage>
        <taxon>Bacteria</taxon>
        <taxon>Pseudomonadati</taxon>
        <taxon>Pseudomonadota</taxon>
        <taxon>Gammaproteobacteria</taxon>
        <taxon>Enterobacterales</taxon>
        <taxon>Enterobacteriaceae</taxon>
        <taxon>Salmonella</taxon>
    </lineage>
</organism>
<sequence>MSDVTVVNCPTCGKPVVWGEISPFRPFCSKRCQLIDLGEWAAEEKRIASSGDPSDSDDWSEER</sequence>
<reference key="1">
    <citation type="journal article" date="2009" name="BMC Genomics">
        <title>Pseudogene accumulation in the evolutionary histories of Salmonella enterica serovars Paratyphi A and Typhi.</title>
        <authorList>
            <person name="Holt K.E."/>
            <person name="Thomson N.R."/>
            <person name="Wain J."/>
            <person name="Langridge G.C."/>
            <person name="Hasan R."/>
            <person name="Bhutta Z.A."/>
            <person name="Quail M.A."/>
            <person name="Norbertczak H."/>
            <person name="Walker D."/>
            <person name="Simmonds M."/>
            <person name="White B."/>
            <person name="Bason N."/>
            <person name="Mungall K."/>
            <person name="Dougan G."/>
            <person name="Parkhill J."/>
        </authorList>
    </citation>
    <scope>NUCLEOTIDE SEQUENCE [LARGE SCALE GENOMIC DNA]</scope>
    <source>
        <strain>AKU_12601</strain>
    </source>
</reference>
<dbReference type="EMBL" id="FM200053">
    <property type="protein sequence ID" value="CAR58249.1"/>
    <property type="molecule type" value="Genomic_DNA"/>
</dbReference>
<dbReference type="RefSeq" id="WP_001286418.1">
    <property type="nucleotide sequence ID" value="NC_011147.1"/>
</dbReference>
<dbReference type="SMR" id="B5BLD4"/>
<dbReference type="KEGG" id="sek:SSPA0138"/>
<dbReference type="HOGENOM" id="CLU_178280_3_1_6"/>
<dbReference type="Proteomes" id="UP000001869">
    <property type="component" value="Chromosome"/>
</dbReference>
<dbReference type="GO" id="GO:0008657">
    <property type="term" value="F:DNA topoisomerase type II (double strand cut, ATP-hydrolyzing) inhibitor activity"/>
    <property type="evidence" value="ECO:0007669"/>
    <property type="project" value="UniProtKB-UniRule"/>
</dbReference>
<dbReference type="GO" id="GO:0008270">
    <property type="term" value="F:zinc ion binding"/>
    <property type="evidence" value="ECO:0007669"/>
    <property type="project" value="UniProtKB-UniRule"/>
</dbReference>
<dbReference type="GO" id="GO:0006355">
    <property type="term" value="P:regulation of DNA-templated transcription"/>
    <property type="evidence" value="ECO:0007669"/>
    <property type="project" value="InterPro"/>
</dbReference>
<dbReference type="Gene3D" id="3.30.50.10">
    <property type="entry name" value="Erythroid Transcription Factor GATA-1, subunit A"/>
    <property type="match status" value="1"/>
</dbReference>
<dbReference type="HAMAP" id="MF_00649">
    <property type="entry name" value="DNA_gyrase_inhibitor_YacG"/>
    <property type="match status" value="1"/>
</dbReference>
<dbReference type="InterPro" id="IPR005584">
    <property type="entry name" value="DNA_gyrase_inhibitor_YacG"/>
</dbReference>
<dbReference type="InterPro" id="IPR013088">
    <property type="entry name" value="Znf_NHR/GATA"/>
</dbReference>
<dbReference type="NCBIfam" id="NF001638">
    <property type="entry name" value="PRK00418.1"/>
    <property type="match status" value="1"/>
</dbReference>
<dbReference type="PANTHER" id="PTHR36150">
    <property type="entry name" value="DNA GYRASE INHIBITOR YACG"/>
    <property type="match status" value="1"/>
</dbReference>
<dbReference type="PANTHER" id="PTHR36150:SF1">
    <property type="entry name" value="DNA GYRASE INHIBITOR YACG"/>
    <property type="match status" value="1"/>
</dbReference>
<dbReference type="Pfam" id="PF03884">
    <property type="entry name" value="YacG"/>
    <property type="match status" value="1"/>
</dbReference>
<dbReference type="SUPFAM" id="SSF57716">
    <property type="entry name" value="Glucocorticoid receptor-like (DNA-binding domain)"/>
    <property type="match status" value="1"/>
</dbReference>